<name>MSCL_CAMHC</name>
<feature type="chain" id="PRO_1000015369" description="Large-conductance mechanosensitive channel">
    <location>
        <begin position="1"/>
        <end position="132"/>
    </location>
</feature>
<feature type="transmembrane region" description="Helical" evidence="1">
    <location>
        <begin position="10"/>
        <end position="30"/>
    </location>
</feature>
<feature type="transmembrane region" description="Helical" evidence="1">
    <location>
        <begin position="76"/>
        <end position="96"/>
    </location>
</feature>
<keyword id="KW-0997">Cell inner membrane</keyword>
<keyword id="KW-1003">Cell membrane</keyword>
<keyword id="KW-0407">Ion channel</keyword>
<keyword id="KW-0406">Ion transport</keyword>
<keyword id="KW-0472">Membrane</keyword>
<keyword id="KW-1185">Reference proteome</keyword>
<keyword id="KW-0812">Transmembrane</keyword>
<keyword id="KW-1133">Transmembrane helix</keyword>
<keyword id="KW-0813">Transport</keyword>
<dbReference type="EMBL" id="CP000776">
    <property type="protein sequence ID" value="ABS51825.1"/>
    <property type="molecule type" value="Genomic_DNA"/>
</dbReference>
<dbReference type="RefSeq" id="WP_012109233.1">
    <property type="nucleotide sequence ID" value="NC_009714.1"/>
</dbReference>
<dbReference type="SMR" id="A7I339"/>
<dbReference type="STRING" id="360107.CHAB381_1381"/>
<dbReference type="KEGG" id="cha:CHAB381_1381"/>
<dbReference type="eggNOG" id="COG1970">
    <property type="taxonomic scope" value="Bacteria"/>
</dbReference>
<dbReference type="HOGENOM" id="CLU_095787_0_0_7"/>
<dbReference type="OrthoDB" id="9810350at2"/>
<dbReference type="Proteomes" id="UP000002407">
    <property type="component" value="Chromosome"/>
</dbReference>
<dbReference type="GO" id="GO:0005886">
    <property type="term" value="C:plasma membrane"/>
    <property type="evidence" value="ECO:0007669"/>
    <property type="project" value="UniProtKB-SubCell"/>
</dbReference>
<dbReference type="GO" id="GO:0008381">
    <property type="term" value="F:mechanosensitive monoatomic ion channel activity"/>
    <property type="evidence" value="ECO:0007669"/>
    <property type="project" value="UniProtKB-UniRule"/>
</dbReference>
<dbReference type="FunFam" id="1.10.1200.120:FF:000001">
    <property type="entry name" value="Large-conductance mechanosensitive channel"/>
    <property type="match status" value="1"/>
</dbReference>
<dbReference type="Gene3D" id="1.10.1200.120">
    <property type="entry name" value="Large-conductance mechanosensitive channel, MscL, domain 1"/>
    <property type="match status" value="1"/>
</dbReference>
<dbReference type="HAMAP" id="MF_00115">
    <property type="entry name" value="MscL"/>
    <property type="match status" value="1"/>
</dbReference>
<dbReference type="InterPro" id="IPR019823">
    <property type="entry name" value="Mechanosensitive_channel_CS"/>
</dbReference>
<dbReference type="InterPro" id="IPR001185">
    <property type="entry name" value="MS_channel"/>
</dbReference>
<dbReference type="InterPro" id="IPR037673">
    <property type="entry name" value="MSC/AndL"/>
</dbReference>
<dbReference type="InterPro" id="IPR036019">
    <property type="entry name" value="MscL_channel"/>
</dbReference>
<dbReference type="NCBIfam" id="TIGR00220">
    <property type="entry name" value="mscL"/>
    <property type="match status" value="1"/>
</dbReference>
<dbReference type="NCBIfam" id="NF001843">
    <property type="entry name" value="PRK00567.1-4"/>
    <property type="match status" value="1"/>
</dbReference>
<dbReference type="NCBIfam" id="NF010557">
    <property type="entry name" value="PRK13952.1"/>
    <property type="match status" value="1"/>
</dbReference>
<dbReference type="PANTHER" id="PTHR30266:SF2">
    <property type="entry name" value="LARGE-CONDUCTANCE MECHANOSENSITIVE CHANNEL"/>
    <property type="match status" value="1"/>
</dbReference>
<dbReference type="PANTHER" id="PTHR30266">
    <property type="entry name" value="MECHANOSENSITIVE CHANNEL MSCL"/>
    <property type="match status" value="1"/>
</dbReference>
<dbReference type="Pfam" id="PF01741">
    <property type="entry name" value="MscL"/>
    <property type="match status" value="1"/>
</dbReference>
<dbReference type="PRINTS" id="PR01264">
    <property type="entry name" value="MECHCHANNEL"/>
</dbReference>
<dbReference type="SUPFAM" id="SSF81330">
    <property type="entry name" value="Gated mechanosensitive channel"/>
    <property type="match status" value="1"/>
</dbReference>
<dbReference type="PROSITE" id="PS01327">
    <property type="entry name" value="MSCL"/>
    <property type="match status" value="1"/>
</dbReference>
<comment type="function">
    <text evidence="1">Channel that opens in response to stretch forces in the membrane lipid bilayer. May participate in the regulation of osmotic pressure changes within the cell.</text>
</comment>
<comment type="subunit">
    <text evidence="1">Homopentamer.</text>
</comment>
<comment type="subcellular location">
    <subcellularLocation>
        <location evidence="1">Cell inner membrane</location>
        <topology evidence="1">Multi-pass membrane protein</topology>
    </subcellularLocation>
</comment>
<comment type="similarity">
    <text evidence="1">Belongs to the MscL family.</text>
</comment>
<sequence length="132" mass="14296">MSFIKEFKEFAVKGNVIDMAVGVVIGSAFGKIVSSLVGDVIMPVVGVLTGGVNFTDLKITIKEAVGENAAVTINYGNFIQVTIDFLIIAFCIFLAIKAINQLKKPEKQEPKAPAEPNDEVKLLSEIRDLLKK</sequence>
<evidence type="ECO:0000255" key="1">
    <source>
        <dbReference type="HAMAP-Rule" id="MF_00115"/>
    </source>
</evidence>
<gene>
    <name evidence="1" type="primary">mscL</name>
    <name type="ordered locus">CHAB381_1381</name>
</gene>
<proteinExistence type="inferred from homology"/>
<organism>
    <name type="scientific">Campylobacter hominis (strain ATCC BAA-381 / DSM 21671 / CCUG 45161 / LMG 19568 / NCTC 13146 / CH001A)</name>
    <dbReference type="NCBI Taxonomy" id="360107"/>
    <lineage>
        <taxon>Bacteria</taxon>
        <taxon>Pseudomonadati</taxon>
        <taxon>Campylobacterota</taxon>
        <taxon>Epsilonproteobacteria</taxon>
        <taxon>Campylobacterales</taxon>
        <taxon>Campylobacteraceae</taxon>
        <taxon>Campylobacter</taxon>
    </lineage>
</organism>
<protein>
    <recommendedName>
        <fullName evidence="1">Large-conductance mechanosensitive channel</fullName>
    </recommendedName>
</protein>
<reference key="1">
    <citation type="submission" date="2007-07" db="EMBL/GenBank/DDBJ databases">
        <title>Complete genome sequence of Campylobacter hominis ATCC BAA-381, a commensal isolated from the human gastrointestinal tract.</title>
        <authorList>
            <person name="Fouts D.E."/>
            <person name="Mongodin E.F."/>
            <person name="Puiu D."/>
            <person name="Sebastian Y."/>
            <person name="Miller W.G."/>
            <person name="Mandrell R.E."/>
            <person name="Nelson K.E."/>
        </authorList>
    </citation>
    <scope>NUCLEOTIDE SEQUENCE [LARGE SCALE GENOMIC DNA]</scope>
    <source>
        <strain>ATCC BAA-381 / DSM 21671 / CCUG 45161 / LMG 19568 / NCTC 13146 / CH001A</strain>
    </source>
</reference>
<accession>A7I339</accession>